<organism>
    <name type="scientific">Astacus astacus</name>
    <name type="common">Noble crayfish</name>
    <name type="synonym">Astacus fluviatilis</name>
    <dbReference type="NCBI Taxonomy" id="6715"/>
    <lineage>
        <taxon>Eukaryota</taxon>
        <taxon>Metazoa</taxon>
        <taxon>Ecdysozoa</taxon>
        <taxon>Arthropoda</taxon>
        <taxon>Crustacea</taxon>
        <taxon>Multicrustacea</taxon>
        <taxon>Malacostraca</taxon>
        <taxon>Eumalacostraca</taxon>
        <taxon>Eucarida</taxon>
        <taxon>Decapoda</taxon>
        <taxon>Pleocyemata</taxon>
        <taxon>Astacidea</taxon>
        <taxon>Astacoidea</taxon>
        <taxon>Astacidae</taxon>
        <taxon>Astacus</taxon>
    </lineage>
</organism>
<keyword id="KW-0104">Cadmium</keyword>
<keyword id="KW-0903">Direct protein sequencing</keyword>
<keyword id="KW-0479">Metal-binding</keyword>
<keyword id="KW-0480">Metal-thiolate cluster</keyword>
<dbReference type="SMR" id="P55951"/>
<dbReference type="GO" id="GO:0046872">
    <property type="term" value="F:metal ion binding"/>
    <property type="evidence" value="ECO:0007669"/>
    <property type="project" value="UniProtKB-KW"/>
</dbReference>
<dbReference type="InterPro" id="IPR002045">
    <property type="entry name" value="Metalthion_crustacean"/>
</dbReference>
<dbReference type="InterPro" id="IPR017854">
    <property type="entry name" value="Metalthion_dom_sf"/>
</dbReference>
<dbReference type="PRINTS" id="PR00858">
    <property type="entry name" value="MTCRUSTACEAN"/>
</dbReference>
<dbReference type="SUPFAM" id="SSF57868">
    <property type="entry name" value="Metallothionein"/>
    <property type="match status" value="2"/>
</dbReference>
<comment type="function">
    <text>Metallothioneins have a high content of cysteine residues that bind various heavy metals. Class I MTS in crustacea are involved in the sequestration of elevated levels of heavy-metal ions.</text>
</comment>
<comment type="induction">
    <text>By cadmium.</text>
</comment>
<comment type="mass spectrometry" mass="5910.8" method="MALDI" evidence="2"/>
<comment type="similarity">
    <text evidence="3">Belongs to the metallothionein superfamily. Type 3 family.</text>
</comment>
<proteinExistence type="evidence at protein level"/>
<protein>
    <recommendedName>
        <fullName>Metallothionein</fullName>
        <shortName>MT</shortName>
    </recommendedName>
</protein>
<reference key="1">
    <citation type="journal article" date="1996" name="Biochem. J.">
        <title>Primary structures of decapod crustacean metallothioneins with special emphasis on freshwater and semi-terrestrial species.</title>
        <authorList>
            <person name="Pedersen S.N."/>
            <person name="Pedersen K.L."/>
            <person name="Hoejrup P."/>
            <person name="Depledge M.H."/>
            <person name="Knudsen J."/>
        </authorList>
    </citation>
    <scope>PROTEIN SEQUENCE</scope>
    <scope>MASS SPECTROMETRY</scope>
    <source>
        <tissue>Midgut</tissue>
    </source>
</reference>
<accession>P55951</accession>
<evidence type="ECO:0000250" key="1">
    <source>
        <dbReference type="UniProtKB" id="P29499"/>
    </source>
</evidence>
<evidence type="ECO:0000269" key="2">
    <source>
    </source>
</evidence>
<evidence type="ECO:0000305" key="3"/>
<name>MT_ASTAS</name>
<feature type="chain" id="PRO_0000197343" description="Metallothionein">
    <location>
        <begin position="1"/>
        <end position="58"/>
    </location>
</feature>
<feature type="region of interest" description="Beta">
    <location>
        <begin position="1"/>
        <end position="29"/>
    </location>
</feature>
<feature type="region of interest" description="Alpha">
    <location>
        <begin position="30"/>
        <end position="58"/>
    </location>
</feature>
<feature type="binding site" evidence="1">
    <location>
        <position position="5"/>
    </location>
    <ligand>
        <name>a divalent metal cation</name>
        <dbReference type="ChEBI" id="CHEBI:60240"/>
        <label>1</label>
        <note>in cluster B</note>
    </ligand>
</feature>
<feature type="binding site" evidence="1">
    <location>
        <position position="6"/>
    </location>
    <ligand>
        <name>a divalent metal cation</name>
        <dbReference type="ChEBI" id="CHEBI:60240"/>
        <label>1</label>
        <note>in cluster B</note>
    </ligand>
</feature>
<feature type="binding site" evidence="1">
    <location>
        <position position="6"/>
    </location>
    <ligand>
        <name>a divalent metal cation</name>
        <dbReference type="ChEBI" id="CHEBI:60240"/>
        <label>2</label>
        <note>in cluster B</note>
    </ligand>
</feature>
<feature type="binding site" evidence="1">
    <location>
        <position position="10"/>
    </location>
    <ligand>
        <name>a divalent metal cation</name>
        <dbReference type="ChEBI" id="CHEBI:60240"/>
        <label>2</label>
        <note>in cluster B</note>
    </ligand>
</feature>
<feature type="binding site" evidence="1">
    <location>
        <position position="12"/>
    </location>
    <ligand>
        <name>a divalent metal cation</name>
        <dbReference type="ChEBI" id="CHEBI:60240"/>
        <label>3</label>
        <note>in cluster B</note>
    </ligand>
</feature>
<feature type="binding site" evidence="1">
    <location>
        <position position="17"/>
    </location>
    <ligand>
        <name>a divalent metal cation</name>
        <dbReference type="ChEBI" id="CHEBI:60240"/>
        <label>1</label>
        <note>in cluster B</note>
    </ligand>
</feature>
<feature type="binding site" evidence="1">
    <location>
        <position position="17"/>
    </location>
    <ligand>
        <name>a divalent metal cation</name>
        <dbReference type="ChEBI" id="CHEBI:60240"/>
        <label>3</label>
        <note>in cluster B</note>
    </ligand>
</feature>
<feature type="binding site" evidence="1">
    <location>
        <position position="21"/>
    </location>
    <ligand>
        <name>a divalent metal cation</name>
        <dbReference type="ChEBI" id="CHEBI:60240"/>
        <label>1</label>
        <note>in cluster B</note>
    </ligand>
</feature>
<feature type="binding site" evidence="1">
    <location>
        <position position="23"/>
    </location>
    <ligand>
        <name>a divalent metal cation</name>
        <dbReference type="ChEBI" id="CHEBI:60240"/>
        <label>2</label>
        <note>in cluster B</note>
    </ligand>
</feature>
<feature type="binding site" evidence="1">
    <location>
        <position position="26"/>
    </location>
    <ligand>
        <name>a divalent metal cation</name>
        <dbReference type="ChEBI" id="CHEBI:60240"/>
        <label>2</label>
        <note>in cluster B</note>
    </ligand>
</feature>
<feature type="binding site" evidence="1">
    <location>
        <position position="26"/>
    </location>
    <ligand>
        <name>a divalent metal cation</name>
        <dbReference type="ChEBI" id="CHEBI:60240"/>
        <label>3</label>
        <note>in cluster B</note>
    </ligand>
</feature>
<feature type="binding site" evidence="1">
    <location>
        <position position="28"/>
    </location>
    <ligand>
        <name>a divalent metal cation</name>
        <dbReference type="ChEBI" id="CHEBI:60240"/>
        <label>3</label>
        <note>in cluster B</note>
    </ligand>
</feature>
<feature type="binding site" evidence="1">
    <location>
        <position position="31"/>
    </location>
    <ligand>
        <name>a divalent metal cation</name>
        <dbReference type="ChEBI" id="CHEBI:60240"/>
        <label>4</label>
        <note>in cluster A</note>
    </ligand>
</feature>
<feature type="binding site" evidence="1">
    <location>
        <position position="34"/>
    </location>
    <ligand>
        <name>a divalent metal cation</name>
        <dbReference type="ChEBI" id="CHEBI:60240"/>
        <label>4</label>
        <note>in cluster A</note>
    </ligand>
</feature>
<feature type="binding site" evidence="1">
    <location>
        <position position="34"/>
    </location>
    <ligand>
        <name>a divalent metal cation</name>
        <dbReference type="ChEBI" id="CHEBI:60240"/>
        <label>5</label>
        <note>in cluster A</note>
    </ligand>
</feature>
<feature type="binding site" evidence="1">
    <location>
        <position position="38"/>
    </location>
    <ligand>
        <name>a divalent metal cation</name>
        <dbReference type="ChEBI" id="CHEBI:60240"/>
        <label>5</label>
        <note>in cluster A</note>
    </ligand>
</feature>
<feature type="binding site" evidence="1">
    <location>
        <position position="40"/>
    </location>
    <ligand>
        <name>a divalent metal cation</name>
        <dbReference type="ChEBI" id="CHEBI:60240"/>
        <label>6</label>
        <note>in cluster A</note>
    </ligand>
</feature>
<feature type="binding site" evidence="1">
    <location>
        <position position="46"/>
    </location>
    <ligand>
        <name>a divalent metal cation</name>
        <dbReference type="ChEBI" id="CHEBI:60240"/>
        <label>6</label>
        <note>in cluster A</note>
    </ligand>
</feature>
<feature type="binding site" evidence="1">
    <location>
        <position position="50"/>
    </location>
    <ligand>
        <name>a divalent metal cation</name>
        <dbReference type="ChEBI" id="CHEBI:60240"/>
        <label>4</label>
        <note>in cluster A</note>
    </ligand>
</feature>
<feature type="binding site" evidence="1">
    <location>
        <position position="50"/>
    </location>
    <ligand>
        <name>a divalent metal cation</name>
        <dbReference type="ChEBI" id="CHEBI:60240"/>
        <label>6</label>
        <note>in cluster A</note>
    </ligand>
</feature>
<feature type="binding site" evidence="1">
    <location>
        <position position="54"/>
    </location>
    <ligand>
        <name>a divalent metal cation</name>
        <dbReference type="ChEBI" id="CHEBI:60240"/>
        <label>4</label>
        <note>in cluster A</note>
    </ligand>
</feature>
<feature type="binding site" evidence="1">
    <location>
        <position position="56"/>
    </location>
    <ligand>
        <name>a divalent metal cation</name>
        <dbReference type="ChEBI" id="CHEBI:60240"/>
        <label>5</label>
        <note>in cluster A</note>
    </ligand>
</feature>
<feature type="binding site" evidence="1">
    <location>
        <position position="57"/>
    </location>
    <ligand>
        <name>a divalent metal cation</name>
        <dbReference type="ChEBI" id="CHEBI:60240"/>
        <label>5</label>
        <note>in cluster A</note>
    </ligand>
</feature>
<feature type="binding site" evidence="1">
    <location>
        <position position="57"/>
    </location>
    <ligand>
        <name>a divalent metal cation</name>
        <dbReference type="ChEBI" id="CHEBI:60240"/>
        <label>6</label>
        <note>in cluster A</note>
    </ligand>
</feature>
<feature type="sequence variant" description="In variant isolated in low cadmium concentration.">
    <location>
        <position position="1"/>
    </location>
</feature>
<sequence length="58" mass="5911">MPGPCCNDVCECAAGGCKTGCVCTSCRCSPCDKCTSGCKCPSKEECAKTCSKPCECCP</sequence>